<evidence type="ECO:0000250" key="1">
    <source>
        <dbReference type="UniProtKB" id="Q6MG61"/>
    </source>
</evidence>
<evidence type="ECO:0000250" key="2">
    <source>
        <dbReference type="UniProtKB" id="Q9Z1Q5"/>
    </source>
</evidence>
<evidence type="ECO:0000255" key="3"/>
<evidence type="ECO:0000255" key="4">
    <source>
        <dbReference type="PROSITE-ProRule" id="PRU00685"/>
    </source>
</evidence>
<evidence type="ECO:0000269" key="5">
    <source>
    </source>
</evidence>
<evidence type="ECO:0000269" key="6">
    <source>
    </source>
</evidence>
<evidence type="ECO:0000269" key="7">
    <source>
    </source>
</evidence>
<evidence type="ECO:0000269" key="8">
    <source>
    </source>
</evidence>
<evidence type="ECO:0000269" key="9">
    <source>
    </source>
</evidence>
<evidence type="ECO:0000269" key="10">
    <source>
    </source>
</evidence>
<evidence type="ECO:0000269" key="11">
    <source>
    </source>
</evidence>
<evidence type="ECO:0000269" key="12">
    <source>
    </source>
</evidence>
<evidence type="ECO:0000269" key="13">
    <source>
    </source>
</evidence>
<evidence type="ECO:0000269" key="14">
    <source>
    </source>
</evidence>
<evidence type="ECO:0000269" key="15">
    <source>
    </source>
</evidence>
<evidence type="ECO:0000269" key="16">
    <source>
    </source>
</evidence>
<evidence type="ECO:0000269" key="17">
    <source>
    </source>
</evidence>
<evidence type="ECO:0000269" key="18">
    <source>
    </source>
</evidence>
<evidence type="ECO:0000269" key="19">
    <source>
    </source>
</evidence>
<evidence type="ECO:0000269" key="20">
    <source ref="10"/>
</evidence>
<evidence type="ECO:0000303" key="21">
    <source>
    </source>
</evidence>
<evidence type="ECO:0000303" key="22">
    <source>
    </source>
</evidence>
<evidence type="ECO:0000305" key="23"/>
<evidence type="ECO:0000305" key="24">
    <source>
    </source>
</evidence>
<evidence type="ECO:0000305" key="25">
    <source>
    </source>
</evidence>
<evidence type="ECO:0000305" key="26">
    <source>
    </source>
</evidence>
<evidence type="ECO:0000305" key="27">
    <source>
    </source>
</evidence>
<evidence type="ECO:0000312" key="28">
    <source>
        <dbReference type="HGNC" id="HGNC:2062"/>
    </source>
</evidence>
<evidence type="ECO:0007744" key="29">
    <source>
        <dbReference type="PDB" id="1K0N"/>
    </source>
</evidence>
<evidence type="ECO:0007744" key="30">
    <source>
    </source>
</evidence>
<evidence type="ECO:0007744" key="31">
    <source>
    </source>
</evidence>
<evidence type="ECO:0007744" key="32">
    <source>
    </source>
</evidence>
<evidence type="ECO:0007744" key="33">
    <source>
    </source>
</evidence>
<evidence type="ECO:0007744" key="34">
    <source>
    </source>
</evidence>
<evidence type="ECO:0007829" key="35">
    <source>
        <dbReference type="PDB" id="1K0N"/>
    </source>
</evidence>
<evidence type="ECO:0007829" key="36">
    <source>
        <dbReference type="PDB" id="4JZQ"/>
    </source>
</evidence>
<evidence type="ECO:0007829" key="37">
    <source>
        <dbReference type="PDB" id="4K0N"/>
    </source>
</evidence>
<sequence length="241" mass="26923">MAEEQPQVELFVKAGSDGAKIGNCPFSQRLFMVLWLKGVTFNVTTVDTKRRTETVQKLCPGGQLPFLLYGTEVHTDTNKIEEFLEAVLCPPRYPKLAALNPESNTAGLDIFAKFSAYIKNSNPALNDNLEKGLLKALKVLDNYLTSPLPEEVDETSAEDEGVSQRKFLDGNELTLADCNLLPKLHIVQVVCKKYRGFTIPEAFRGVHRYLSNAYAREEFASTCPDDEEIELAYEQVAKALK</sequence>
<accession>O00299</accession>
<accession>Q15089</accession>
<accession>Q502X1</accession>
<name>CLIC1_HUMAN</name>
<organism>
    <name type="scientific">Homo sapiens</name>
    <name type="common">Human</name>
    <dbReference type="NCBI Taxonomy" id="9606"/>
    <lineage>
        <taxon>Eukaryota</taxon>
        <taxon>Metazoa</taxon>
        <taxon>Chordata</taxon>
        <taxon>Craniata</taxon>
        <taxon>Vertebrata</taxon>
        <taxon>Euteleostomi</taxon>
        <taxon>Mammalia</taxon>
        <taxon>Eutheria</taxon>
        <taxon>Euarchontoglires</taxon>
        <taxon>Primates</taxon>
        <taxon>Haplorrhini</taxon>
        <taxon>Catarrhini</taxon>
        <taxon>Hominidae</taxon>
        <taxon>Homo</taxon>
    </lineage>
</organism>
<keyword id="KW-0002">3D-structure</keyword>
<keyword id="KW-0007">Acetylation</keyword>
<keyword id="KW-1003">Cell membrane</keyword>
<keyword id="KW-0868">Chloride</keyword>
<keyword id="KW-0869">Chloride channel</keyword>
<keyword id="KW-0963">Cytoplasm</keyword>
<keyword id="KW-0903">Direct protein sequencing</keyword>
<keyword id="KW-1015">Disulfide bond</keyword>
<keyword id="KW-0256">Endoplasmic reticulum</keyword>
<keyword id="KW-0318">Glutathionylation</keyword>
<keyword id="KW-0407">Ion channel</keyword>
<keyword id="KW-0406">Ion transport</keyword>
<keyword id="KW-0472">Membrane</keyword>
<keyword id="KW-0539">Nucleus</keyword>
<keyword id="KW-0560">Oxidoreductase</keyword>
<keyword id="KW-0597">Phosphoprotein</keyword>
<keyword id="KW-1267">Proteomics identification</keyword>
<keyword id="KW-1185">Reference proteome</keyword>
<keyword id="KW-0812">Transmembrane</keyword>
<keyword id="KW-1133">Transmembrane helix</keyword>
<keyword id="KW-0813">Transport</keyword>
<keyword id="KW-0851">Voltage-gated channel</keyword>
<feature type="initiator methionine" description="Removed" evidence="20 30 32 33">
    <location>
        <position position="1"/>
    </location>
</feature>
<feature type="chain" id="PRO_0000144201" description="Chloride intracellular channel protein 1">
    <location>
        <begin position="2"/>
        <end position="241"/>
    </location>
</feature>
<feature type="transmembrane region" description="Helical; Note=After insertion into the membrane" evidence="3">
    <location>
        <begin position="26"/>
        <end position="46"/>
    </location>
</feature>
<feature type="domain" description="GST C-terminal" evidence="4">
    <location>
        <begin position="93"/>
        <end position="233"/>
    </location>
</feature>
<feature type="region of interest" description="Required for insertion into the membrane">
    <location>
        <begin position="2"/>
        <end position="90"/>
    </location>
</feature>
<feature type="short sequence motif" description="G-site" evidence="26">
    <location>
        <begin position="24"/>
        <end position="27"/>
    </location>
</feature>
<feature type="binding site" evidence="9 29">
    <location>
        <position position="24"/>
    </location>
    <ligand>
        <name>glutathione</name>
        <dbReference type="ChEBI" id="CHEBI:57925"/>
    </ligand>
</feature>
<feature type="binding site" evidence="9 29">
    <location>
        <position position="64"/>
    </location>
    <ligand>
        <name>glutathione</name>
        <dbReference type="ChEBI" id="CHEBI:57925"/>
    </ligand>
</feature>
<feature type="binding site" evidence="9 29">
    <location>
        <position position="77"/>
    </location>
    <ligand>
        <name>glutathione</name>
        <dbReference type="ChEBI" id="CHEBI:57925"/>
    </ligand>
</feature>
<feature type="modified residue" description="N-acetylalanine" evidence="20 30 32 33">
    <location>
        <position position="2"/>
    </location>
</feature>
<feature type="modified residue" description="N6-acetyllysine" evidence="31">
    <location>
        <position position="13"/>
    </location>
</feature>
<feature type="modified residue" description="S-glutathionyl cysteine; alternate" evidence="14">
    <location>
        <position position="24"/>
    </location>
</feature>
<feature type="modified residue" description="N6-acetyllysine" evidence="31">
    <location>
        <position position="119"/>
    </location>
</feature>
<feature type="modified residue" description="Phosphoserine" evidence="34">
    <location>
        <position position="121"/>
    </location>
</feature>
<feature type="modified residue" description="N6-acetyllysine" evidence="31">
    <location>
        <position position="131"/>
    </location>
</feature>
<feature type="modified residue" description="Phosphoserine" evidence="34">
    <location>
        <position position="156"/>
    </location>
</feature>
<feature type="modified residue" description="Phosphoserine" evidence="34">
    <location>
        <position position="211"/>
    </location>
</feature>
<feature type="modified residue" description="Phosphotyrosine" evidence="2">
    <location>
        <position position="233"/>
    </location>
</feature>
<feature type="disulfide bond" description="Alternate" evidence="14">
    <location>
        <begin position="24"/>
        <end position="59"/>
    </location>
</feature>
<feature type="mutagenesis site" description="Loss of glutathione-dependent oxidoreductase activity. Reduces channel conductance and abolishes its dependence on membrane redox potential." evidence="15 17 18">
    <original>C</original>
    <variation>A</variation>
    <variation>S</variation>
    <location>
        <position position="24"/>
    </location>
</feature>
<feature type="mutagenesis site" description="Loss of dimerization and of ion transport activity." evidence="14">
    <original>C</original>
    <variation>S</variation>
    <location>
        <position position="24"/>
    </location>
</feature>
<feature type="mutagenesis site" description="Decreases glutathione-dependent oxidoreductase activity." evidence="18">
    <original>K</original>
    <variation>A</variation>
    <location>
        <position position="37"/>
    </location>
</feature>
<feature type="mutagenesis site" description="Loss of glutathione-dependent oxidoreductase activity." evidence="17 18">
    <original>C</original>
    <variation>A</variation>
    <location>
        <position position="59"/>
    </location>
</feature>
<feature type="mutagenesis site" description="Loss of dimerization and of ion transport activity." evidence="14">
    <original>C</original>
    <variation>S</variation>
    <location>
        <position position="59"/>
    </location>
</feature>
<feature type="sequence conflict" description="In Ref. 1; AAC25675 and 3; AAD26137." evidence="23" ref="1 3">
    <original>Q</original>
    <variation>E</variation>
    <location>
        <position position="63"/>
    </location>
</feature>
<feature type="strand" evidence="37">
    <location>
        <begin position="8"/>
        <end position="14"/>
    </location>
</feature>
<feature type="strand" evidence="37">
    <location>
        <begin position="18"/>
        <end position="21"/>
    </location>
</feature>
<feature type="helix" evidence="37">
    <location>
        <begin position="25"/>
        <end position="37"/>
    </location>
</feature>
<feature type="strand" evidence="37">
    <location>
        <begin position="42"/>
        <end position="46"/>
    </location>
</feature>
<feature type="strand" evidence="35">
    <location>
        <begin position="48"/>
        <end position="50"/>
    </location>
</feature>
<feature type="helix" evidence="37">
    <location>
        <begin position="53"/>
        <end position="58"/>
    </location>
</feature>
<feature type="strand" evidence="37">
    <location>
        <begin position="64"/>
        <end position="69"/>
    </location>
</feature>
<feature type="strand" evidence="37">
    <location>
        <begin position="72"/>
        <end position="76"/>
    </location>
</feature>
<feature type="helix" evidence="37">
    <location>
        <begin position="77"/>
        <end position="87"/>
    </location>
</feature>
<feature type="turn" evidence="37">
    <location>
        <begin position="90"/>
        <end position="92"/>
    </location>
</feature>
<feature type="helix" evidence="37">
    <location>
        <begin position="101"/>
        <end position="104"/>
    </location>
</feature>
<feature type="turn" evidence="37">
    <location>
        <begin position="105"/>
        <end position="109"/>
    </location>
</feature>
<feature type="helix" evidence="37">
    <location>
        <begin position="110"/>
        <end position="119"/>
    </location>
</feature>
<feature type="helix" evidence="37">
    <location>
        <begin position="123"/>
        <end position="125"/>
    </location>
</feature>
<feature type="helix" evidence="37">
    <location>
        <begin position="126"/>
        <end position="145"/>
    </location>
</feature>
<feature type="helix" evidence="37">
    <location>
        <begin position="149"/>
        <end position="151"/>
    </location>
</feature>
<feature type="helix" evidence="36">
    <location>
        <begin position="157"/>
        <end position="159"/>
    </location>
</feature>
<feature type="strand" evidence="37">
    <location>
        <begin position="166"/>
        <end position="172"/>
    </location>
</feature>
<feature type="helix" evidence="37">
    <location>
        <begin position="175"/>
        <end position="195"/>
    </location>
</feature>
<feature type="helix" evidence="37">
    <location>
        <begin position="204"/>
        <end position="214"/>
    </location>
</feature>
<feature type="helix" evidence="37">
    <location>
        <begin position="217"/>
        <end position="220"/>
    </location>
</feature>
<feature type="helix" evidence="37">
    <location>
        <begin position="226"/>
        <end position="232"/>
    </location>
</feature>
<feature type="helix" evidence="37">
    <location>
        <begin position="234"/>
        <end position="237"/>
    </location>
</feature>
<gene>
    <name evidence="22 28" type="primary">CLIC1</name>
    <name type="synonym">G6</name>
    <name evidence="21" type="synonym">NCC27</name>
</gene>
<reference key="1">
    <citation type="journal article" date="1997" name="J. Biol. Chem.">
        <title>Molecular cloning and expression of a chloride ion channel of cell nuclei.</title>
        <authorList>
            <person name="Valenzuela S.M."/>
            <person name="Martin D.K."/>
            <person name="Por S.B."/>
            <person name="Robbins J.M."/>
            <person name="Warton K."/>
            <person name="Bootcov M.R."/>
            <person name="Schofield P.R."/>
            <person name="Campbell T.J."/>
            <person name="Breit S.N."/>
        </authorList>
    </citation>
    <scope>NUCLEOTIDE SEQUENCE [MRNA]</scope>
    <scope>FUNCTION</scope>
    <scope>TRANSPORTER ACTIVITY</scope>
    <scope>SUBCELLULAR LOCATION</scope>
    <source>
        <tissue>Lymphoma</tissue>
    </source>
</reference>
<reference key="2">
    <citation type="submission" date="1997-11" db="EMBL/GenBank/DDBJ databases">
        <title>Cloning and sequence analysis of the gene encoding the xxx-binding protein.</title>
        <authorList>
            <person name="Noh Y.H."/>
            <person name="Hahn M.J."/>
        </authorList>
    </citation>
    <scope>NUCLEOTIDE SEQUENCE [MRNA]</scope>
    <source>
        <tissue>Thymus</tissue>
    </source>
</reference>
<reference key="3">
    <citation type="journal article" date="1999" name="J. Neurosci.">
        <title>A 29 kDa intracellular chloride channel p64H1 is associated with large dense-core vesicles in rat hippocampal neurons.</title>
        <authorList>
            <person name="Chuang J.Z."/>
            <person name="Milner T.A."/>
            <person name="Zhu M."/>
            <person name="Sung C.H."/>
        </authorList>
    </citation>
    <scope>NUCLEOTIDE SEQUENCE [MRNA]</scope>
</reference>
<reference key="4">
    <citation type="journal article" date="1999" name="J. Immunol.">
        <title>Genes encoding three new members of the leukocyte antigen 6 superfamily and a novel member of Ig superfamily, together with genes encoding the regulatory nuclear chloride ion channel protein (hRNCC) and an N omega-N omega-dimethylarginine dimethylaminohydrolase homologue, are found in a 30-kb segment of the MHC class III region.</title>
        <authorList>
            <person name="Ribas G."/>
            <person name="Neville M."/>
            <person name="Wixon J.L."/>
            <person name="Cheng J."/>
            <person name="Campbell R.D."/>
        </authorList>
    </citation>
    <scope>NUCLEOTIDE SEQUENCE [GENOMIC DNA]</scope>
</reference>
<reference key="5">
    <citation type="submission" date="2004-06" db="EMBL/GenBank/DDBJ databases">
        <title>Cloning of human full open reading frames in Gateway(TM) system entry vector (pDONR201).</title>
        <authorList>
            <person name="Halleck A."/>
            <person name="Ebert L."/>
            <person name="Mkoundinya M."/>
            <person name="Schick M."/>
            <person name="Eisenstein S."/>
            <person name="Neubert P."/>
            <person name="Kstrang K."/>
            <person name="Schatten R."/>
            <person name="Shen B."/>
            <person name="Henze S."/>
            <person name="Mar W."/>
            <person name="Korn B."/>
            <person name="Zuo D."/>
            <person name="Hu Y."/>
            <person name="LaBaer J."/>
        </authorList>
    </citation>
    <scope>NUCLEOTIDE SEQUENCE [LARGE SCALE MRNA]</scope>
</reference>
<reference key="6">
    <citation type="journal article" date="2003" name="Genome Res.">
        <title>Analysis of the gene-dense major histocompatibility complex class III region and its comparison to mouse.</title>
        <authorList>
            <person name="Xie T."/>
            <person name="Rowen L."/>
            <person name="Aguado B."/>
            <person name="Ahearn M.E."/>
            <person name="Madan A."/>
            <person name="Qin S."/>
            <person name="Campbell R.D."/>
            <person name="Hood L."/>
        </authorList>
    </citation>
    <scope>NUCLEOTIDE SEQUENCE [LARGE SCALE GENOMIC DNA]</scope>
</reference>
<reference key="7">
    <citation type="submission" date="1999-09" db="EMBL/GenBank/DDBJ databases">
        <title>Homo sapiens 2,229,817bp genomic DNA of 6p21.3 HLA class I region.</title>
        <authorList>
            <person name="Shiina S."/>
            <person name="Tamiya G."/>
            <person name="Oka A."/>
            <person name="Inoko H."/>
        </authorList>
    </citation>
    <scope>NUCLEOTIDE SEQUENCE [LARGE SCALE GENOMIC DNA]</scope>
</reference>
<reference key="8">
    <citation type="journal article" date="2003" name="Nature">
        <title>The DNA sequence and analysis of human chromosome 6.</title>
        <authorList>
            <person name="Mungall A.J."/>
            <person name="Palmer S.A."/>
            <person name="Sims S.K."/>
            <person name="Edwards C.A."/>
            <person name="Ashurst J.L."/>
            <person name="Wilming L."/>
            <person name="Jones M.C."/>
            <person name="Horton R."/>
            <person name="Hunt S.E."/>
            <person name="Scott C.E."/>
            <person name="Gilbert J.G.R."/>
            <person name="Clamp M.E."/>
            <person name="Bethel G."/>
            <person name="Milne S."/>
            <person name="Ainscough R."/>
            <person name="Almeida J.P."/>
            <person name="Ambrose K.D."/>
            <person name="Andrews T.D."/>
            <person name="Ashwell R.I.S."/>
            <person name="Babbage A.K."/>
            <person name="Bagguley C.L."/>
            <person name="Bailey J."/>
            <person name="Banerjee R."/>
            <person name="Barker D.J."/>
            <person name="Barlow K.F."/>
            <person name="Bates K."/>
            <person name="Beare D.M."/>
            <person name="Beasley H."/>
            <person name="Beasley O."/>
            <person name="Bird C.P."/>
            <person name="Blakey S.E."/>
            <person name="Bray-Allen S."/>
            <person name="Brook J."/>
            <person name="Brown A.J."/>
            <person name="Brown J.Y."/>
            <person name="Burford D.C."/>
            <person name="Burrill W."/>
            <person name="Burton J."/>
            <person name="Carder C."/>
            <person name="Carter N.P."/>
            <person name="Chapman J.C."/>
            <person name="Clark S.Y."/>
            <person name="Clark G."/>
            <person name="Clee C.M."/>
            <person name="Clegg S."/>
            <person name="Cobley V."/>
            <person name="Collier R.E."/>
            <person name="Collins J.E."/>
            <person name="Colman L.K."/>
            <person name="Corby N.R."/>
            <person name="Coville G.J."/>
            <person name="Culley K.M."/>
            <person name="Dhami P."/>
            <person name="Davies J."/>
            <person name="Dunn M."/>
            <person name="Earthrowl M.E."/>
            <person name="Ellington A.E."/>
            <person name="Evans K.A."/>
            <person name="Faulkner L."/>
            <person name="Francis M.D."/>
            <person name="Frankish A."/>
            <person name="Frankland J."/>
            <person name="French L."/>
            <person name="Garner P."/>
            <person name="Garnett J."/>
            <person name="Ghori M.J."/>
            <person name="Gilby L.M."/>
            <person name="Gillson C.J."/>
            <person name="Glithero R.J."/>
            <person name="Grafham D.V."/>
            <person name="Grant M."/>
            <person name="Gribble S."/>
            <person name="Griffiths C."/>
            <person name="Griffiths M.N.D."/>
            <person name="Hall R."/>
            <person name="Halls K.S."/>
            <person name="Hammond S."/>
            <person name="Harley J.L."/>
            <person name="Hart E.A."/>
            <person name="Heath P.D."/>
            <person name="Heathcott R."/>
            <person name="Holmes S.J."/>
            <person name="Howden P.J."/>
            <person name="Howe K.L."/>
            <person name="Howell G.R."/>
            <person name="Huckle E."/>
            <person name="Humphray S.J."/>
            <person name="Humphries M.D."/>
            <person name="Hunt A.R."/>
            <person name="Johnson C.M."/>
            <person name="Joy A.A."/>
            <person name="Kay M."/>
            <person name="Keenan S.J."/>
            <person name="Kimberley A.M."/>
            <person name="King A."/>
            <person name="Laird G.K."/>
            <person name="Langford C."/>
            <person name="Lawlor S."/>
            <person name="Leongamornlert D.A."/>
            <person name="Leversha M."/>
            <person name="Lloyd C.R."/>
            <person name="Lloyd D.M."/>
            <person name="Loveland J.E."/>
            <person name="Lovell J."/>
            <person name="Martin S."/>
            <person name="Mashreghi-Mohammadi M."/>
            <person name="Maslen G.L."/>
            <person name="Matthews L."/>
            <person name="McCann O.T."/>
            <person name="McLaren S.J."/>
            <person name="McLay K."/>
            <person name="McMurray A."/>
            <person name="Moore M.J.F."/>
            <person name="Mullikin J.C."/>
            <person name="Niblett D."/>
            <person name="Nickerson T."/>
            <person name="Novik K.L."/>
            <person name="Oliver K."/>
            <person name="Overton-Larty E.K."/>
            <person name="Parker A."/>
            <person name="Patel R."/>
            <person name="Pearce A.V."/>
            <person name="Peck A.I."/>
            <person name="Phillimore B.J.C.T."/>
            <person name="Phillips S."/>
            <person name="Plumb R.W."/>
            <person name="Porter K.M."/>
            <person name="Ramsey Y."/>
            <person name="Ranby S.A."/>
            <person name="Rice C.M."/>
            <person name="Ross M.T."/>
            <person name="Searle S.M."/>
            <person name="Sehra H.K."/>
            <person name="Sheridan E."/>
            <person name="Skuce C.D."/>
            <person name="Smith S."/>
            <person name="Smith M."/>
            <person name="Spraggon L."/>
            <person name="Squares S.L."/>
            <person name="Steward C.A."/>
            <person name="Sycamore N."/>
            <person name="Tamlyn-Hall G."/>
            <person name="Tester J."/>
            <person name="Theaker A.J."/>
            <person name="Thomas D.W."/>
            <person name="Thorpe A."/>
            <person name="Tracey A."/>
            <person name="Tromans A."/>
            <person name="Tubby B."/>
            <person name="Wall M."/>
            <person name="Wallis J.M."/>
            <person name="West A.P."/>
            <person name="White S.S."/>
            <person name="Whitehead S.L."/>
            <person name="Whittaker H."/>
            <person name="Wild A."/>
            <person name="Willey D.J."/>
            <person name="Wilmer T.E."/>
            <person name="Wood J.M."/>
            <person name="Wray P.W."/>
            <person name="Wyatt J.C."/>
            <person name="Young L."/>
            <person name="Younger R.M."/>
            <person name="Bentley D.R."/>
            <person name="Coulson A."/>
            <person name="Durbin R.M."/>
            <person name="Hubbard T."/>
            <person name="Sulston J.E."/>
            <person name="Dunham I."/>
            <person name="Rogers J."/>
            <person name="Beck S."/>
        </authorList>
    </citation>
    <scope>NUCLEOTIDE SEQUENCE [LARGE SCALE GENOMIC DNA]</scope>
</reference>
<reference key="9">
    <citation type="journal article" date="2004" name="Genome Res.">
        <title>The status, quality, and expansion of the NIH full-length cDNA project: the Mammalian Gene Collection (MGC).</title>
        <authorList>
            <consortium name="The MGC Project Team"/>
        </authorList>
    </citation>
    <scope>NUCLEOTIDE SEQUENCE [LARGE SCALE MRNA]</scope>
    <source>
        <tissue>Testis</tissue>
    </source>
</reference>
<reference key="10">
    <citation type="submission" date="2004-07" db="UniProtKB">
        <authorList>
            <person name="Bienvenut W.V."/>
        </authorList>
    </citation>
    <scope>PROTEIN SEQUENCE OF 2-13</scope>
    <scope>CLEAVAGE OF INITIATOR METHIONINE</scope>
    <scope>ACETYLATION AT ALA-2</scope>
    <scope>IDENTIFICATION BY MASS SPECTROMETRY</scope>
    <source>
        <tissue>B-cell lymphoma</tissue>
    </source>
</reference>
<reference key="11">
    <citation type="submission" date="1995-05" db="EMBL/GenBank/DDBJ databases">
        <authorList>
            <person name="Borsani G."/>
        </authorList>
    </citation>
    <scope>NUCLEOTIDE SEQUENCE [MRNA] OF 32-241</scope>
</reference>
<reference key="12">
    <citation type="journal article" date="2000" name="FASEB J.">
        <title>Functional characterization of the NCC27 nuclear protein in stable transfected CHO-K1 cells.</title>
        <authorList>
            <person name="Tonini R."/>
            <person name="Ferroni A."/>
            <person name="Valenzuela S.M."/>
            <person name="Warton K."/>
            <person name="Campbell T.J."/>
            <person name="Breit S.N."/>
            <person name="Mazzanti M."/>
        </authorList>
    </citation>
    <scope>FUNCTION</scope>
</reference>
<reference key="13">
    <citation type="journal article" date="2000" name="J. Physiol. (Lond.)">
        <title>The nuclear chloride ion channel NCC27 is involved in regulation of the cell cycle.</title>
        <authorList>
            <person name="Valenzuela S.M."/>
            <person name="Mazzanti M."/>
            <person name="Tonini R."/>
            <person name="Qiu M.R."/>
            <person name="Warton K."/>
            <person name="Musgrove E.A."/>
            <person name="Campbell T.J."/>
            <person name="Breit S.N."/>
        </authorList>
    </citation>
    <scope>FUNCTION</scope>
    <scope>TRANSPORTER ACTIVITY</scope>
</reference>
<reference key="14">
    <citation type="journal article" date="2000" name="Mol. Biol. Cell">
        <title>Identification of a novel member of the chloride intracellular channel gene family (CLIC5) that associates with the actin cytoskeleton of placental microvilli.</title>
        <authorList>
            <person name="Berryman M."/>
            <person name="Bretscher A."/>
        </authorList>
    </citation>
    <scope>TISSUE SPECIFICITY</scope>
    <scope>SUBCELLULAR LOCATION</scope>
</reference>
<reference key="15">
    <citation type="journal article" date="2000" name="J. Biol. Chem.">
        <title>CLIC-1 functions as a chloride channel when expressed and purified from bacteria.</title>
        <authorList>
            <person name="Tulk B.M."/>
            <person name="Schlesinger P.H."/>
            <person name="Kapadia S.A."/>
            <person name="Edwards J.C."/>
        </authorList>
    </citation>
    <scope>FUNCTION</scope>
    <scope>TRANSPORTER ACTIVITY</scope>
    <scope>ACTIVITY REGULATION</scope>
</reference>
<reference key="16">
    <citation type="journal article" date="2002" name="Am. J. Physiol.">
        <title>CLIC1 inserts from the aqueous phase into phospholipid membranes, where it functions as an anion channel.</title>
        <authorList>
            <person name="Tulk B.M."/>
            <person name="Kapadia S."/>
            <person name="Edwards J.C."/>
        </authorList>
    </citation>
    <scope>FUNCTION</scope>
    <scope>SUBCELLULAR LOCATION</scope>
</reference>
<reference key="17">
    <citation type="journal article" date="2002" name="J. Biol. Chem.">
        <title>Recombinant CLIC1 (NCC27) assembles in lipid bilayers via a pH-dependent two-state process to form chloride ion channels with identical characteristics to those observed in Chinese hamster ovary cells expressing CLIC1.</title>
        <authorList>
            <person name="Warton K."/>
            <person name="Tonini R."/>
            <person name="Fairlie W.D."/>
            <person name="Matthews J.M."/>
            <person name="Valenzuela S.M."/>
            <person name="Qiu M.R."/>
            <person name="Wu W.M."/>
            <person name="Pankhurst S."/>
            <person name="Bauskin A.R."/>
            <person name="Harrop S.J."/>
            <person name="Campbell T.J."/>
            <person name="Curmi P.M."/>
            <person name="Breit S.N."/>
            <person name="Mazzanti M."/>
        </authorList>
    </citation>
    <scope>FUNCTION</scope>
    <scope>TRANSPORTER ACTIVITY</scope>
    <scope>ACTIVITY REGULATION</scope>
    <scope>SUBCELLULAR LOCATION</scope>
</reference>
<reference key="18">
    <citation type="journal article" date="2002" name="J. Biol. Chem.">
        <title>AKAP350 at the Golgi apparatus. II. Association of AKAP350 with a novel chloride intracellular channel (CLIC) family member.</title>
        <authorList>
            <person name="Shanks R.A."/>
            <person name="Larocca M.C."/>
            <person name="Berryman M."/>
            <person name="Edwards J.C."/>
            <person name="Urushidani T."/>
            <person name="Navarre J."/>
            <person name="Goldenring J.R."/>
        </authorList>
    </citation>
    <scope>INTERACTION WITH AKAP9</scope>
</reference>
<reference key="19">
    <citation type="journal article" date="2003" name="FEBS Lett.">
        <title>Interaction of sedlin with chloride intracellular channel proteins.</title>
        <authorList>
            <person name="Fan L."/>
            <person name="Yu W."/>
            <person name="Zhu X."/>
        </authorList>
    </citation>
    <scope>INTERACTION WITH TRAPPC2</scope>
    <scope>SUBCELLULAR LOCATION</scope>
</reference>
<reference key="20">
    <citation type="journal article" date="2006" name="Biophys. J.">
        <title>Redox regulation of CLIC1 by cysteine residues associated with the putative channel pore.</title>
        <authorList>
            <person name="Singh H."/>
            <person name="Ashley R.H."/>
        </authorList>
    </citation>
    <scope>FUNCTION</scope>
    <scope>TRANSPORTER ACTIVITY</scope>
    <scope>ACTIVITY REGULATION</scope>
    <scope>MUTAGENESIS OF CYS-24</scope>
</reference>
<reference key="21">
    <citation type="journal article" date="2008" name="Biochemistry">
        <title>Formation of an unfolding intermediate state of soluble chloride intracellular channel protein CLIC1 at acidic pH.</title>
        <authorList>
            <person name="Fanucchi S."/>
            <person name="Adamson R.J."/>
            <person name="Dirr H.W."/>
        </authorList>
    </citation>
    <scope>DOMAIN</scope>
</reference>
<reference key="22">
    <citation type="journal article" date="2009" name="Anal. Chem.">
        <title>Lys-N and trypsin cover complementary parts of the phosphoproteome in a refined SCX-based approach.</title>
        <authorList>
            <person name="Gauci S."/>
            <person name="Helbig A.O."/>
            <person name="Slijper M."/>
            <person name="Krijgsveld J."/>
            <person name="Heck A.J."/>
            <person name="Mohammed S."/>
        </authorList>
    </citation>
    <scope>ACETYLATION [LARGE SCALE ANALYSIS] AT ALA-2</scope>
    <scope>CLEAVAGE OF INITIATOR METHIONINE [LARGE SCALE ANALYSIS]</scope>
    <scope>IDENTIFICATION BY MASS SPECTROMETRY [LARGE SCALE ANALYSIS]</scope>
</reference>
<reference key="23">
    <citation type="journal article" date="2009" name="Science">
        <title>Lysine acetylation targets protein complexes and co-regulates major cellular functions.</title>
        <authorList>
            <person name="Choudhary C."/>
            <person name="Kumar C."/>
            <person name="Gnad F."/>
            <person name="Nielsen M.L."/>
            <person name="Rehman M."/>
            <person name="Walther T.C."/>
            <person name="Olsen J.V."/>
            <person name="Mann M."/>
        </authorList>
    </citation>
    <scope>ACETYLATION [LARGE SCALE ANALYSIS] AT LYS-13; LYS-119 AND LYS-131</scope>
    <scope>IDENTIFICATION BY MASS SPECTROMETRY [LARGE SCALE ANALYSIS]</scope>
</reference>
<reference key="24">
    <citation type="journal article" date="2011" name="BMC Syst. Biol.">
        <title>Initial characterization of the human central proteome.</title>
        <authorList>
            <person name="Burkard T.R."/>
            <person name="Planyavsky M."/>
            <person name="Kaupe I."/>
            <person name="Breitwieser F.P."/>
            <person name="Buerckstuemmer T."/>
            <person name="Bennett K.L."/>
            <person name="Superti-Furga G."/>
            <person name="Colinge J."/>
        </authorList>
    </citation>
    <scope>IDENTIFICATION BY MASS SPECTROMETRY [LARGE SCALE ANALYSIS]</scope>
</reference>
<reference key="25">
    <citation type="journal article" date="2012" name="Mol. Cell. Proteomics">
        <title>Comparative large-scale characterisation of plant vs. mammal proteins reveals similar and idiosyncratic N-alpha acetylation features.</title>
        <authorList>
            <person name="Bienvenut W.V."/>
            <person name="Sumpton D."/>
            <person name="Martinez A."/>
            <person name="Lilla S."/>
            <person name="Espagne C."/>
            <person name="Meinnel T."/>
            <person name="Giglione C."/>
        </authorList>
    </citation>
    <scope>ACETYLATION [LARGE SCALE ANALYSIS] AT ALA-2</scope>
    <scope>CLEAVAGE OF INITIATOR METHIONINE [LARGE SCALE ANALYSIS]</scope>
    <scope>IDENTIFICATION BY MASS SPECTROMETRY [LARGE SCALE ANALYSIS]</scope>
</reference>
<reference key="26">
    <citation type="journal article" date="2012" name="Proc. Natl. Acad. Sci. U.S.A.">
        <title>N-terminal acetylome analyses and functional insights of the N-terminal acetyltransferase NatB.</title>
        <authorList>
            <person name="Van Damme P."/>
            <person name="Lasa M."/>
            <person name="Polevoda B."/>
            <person name="Gazquez C."/>
            <person name="Elosegui-Artola A."/>
            <person name="Kim D.S."/>
            <person name="De Juan-Pardo E."/>
            <person name="Demeyer K."/>
            <person name="Hole K."/>
            <person name="Larrea E."/>
            <person name="Timmerman E."/>
            <person name="Prieto J."/>
            <person name="Arnesen T."/>
            <person name="Sherman F."/>
            <person name="Gevaert K."/>
            <person name="Aldabe R."/>
        </authorList>
    </citation>
    <scope>ACETYLATION [LARGE SCALE ANALYSIS] AT ALA-2</scope>
    <scope>CLEAVAGE OF INITIATOR METHIONINE [LARGE SCALE ANALYSIS]</scope>
    <scope>IDENTIFICATION BY MASS SPECTROMETRY [LARGE SCALE ANALYSIS]</scope>
</reference>
<reference key="27">
    <citation type="journal article" date="2013" name="J. Proteome Res.">
        <title>Toward a comprehensive characterization of a human cancer cell phosphoproteome.</title>
        <authorList>
            <person name="Zhou H."/>
            <person name="Di Palma S."/>
            <person name="Preisinger C."/>
            <person name="Peng M."/>
            <person name="Polat A.N."/>
            <person name="Heck A.J."/>
            <person name="Mohammed S."/>
        </authorList>
    </citation>
    <scope>PHOSPHORYLATION [LARGE SCALE ANALYSIS] AT SER-121; SER-156 AND SER-211</scope>
    <scope>IDENTIFICATION BY MASS SPECTROMETRY [LARGE SCALE ANALYSIS]</scope>
    <source>
        <tissue>Erythroleukemia</tissue>
    </source>
</reference>
<reference key="28">
    <citation type="journal article" date="2014" name="J. Proteomics">
        <title>An enzyme assisted RP-RPLC approach for in-depth analysis of human liver phosphoproteome.</title>
        <authorList>
            <person name="Bian Y."/>
            <person name="Song C."/>
            <person name="Cheng K."/>
            <person name="Dong M."/>
            <person name="Wang F."/>
            <person name="Huang J."/>
            <person name="Sun D."/>
            <person name="Wang L."/>
            <person name="Ye M."/>
            <person name="Zou H."/>
        </authorList>
    </citation>
    <scope>IDENTIFICATION BY MASS SPECTROMETRY [LARGE SCALE ANALYSIS]</scope>
    <source>
        <tissue>Liver</tissue>
    </source>
</reference>
<reference key="29">
    <citation type="journal article" date="2015" name="PLoS ONE">
        <title>Members of the chloride intracellular ion channel protein family demonstrate glutaredoxin-like enzymatic activity.</title>
        <authorList>
            <person name="Al Khamici H."/>
            <person name="Brown L.J."/>
            <person name="Hossain K.R."/>
            <person name="Hudson A.L."/>
            <person name="Sinclair-Burton A.A."/>
            <person name="Ng J.P."/>
            <person name="Daniel E.L."/>
            <person name="Hare J.E."/>
            <person name="Cornell B.A."/>
            <person name="Curmi P.M."/>
            <person name="Davey M.W."/>
            <person name="Valenzuela S.M."/>
        </authorList>
    </citation>
    <scope>FUNCTION</scope>
    <scope>CATALYTIC ACTIVITY</scope>
    <scope>ACTIVITY REGULATION</scope>
    <scope>BIOPHYSICOCHEMICAL PROPERTIES</scope>
    <scope>DOMAIN</scope>
    <scope>MUTAGENESIS OF CYS-24 AND CYS-59</scope>
</reference>
<reference key="30">
    <citation type="journal article" date="2015" name="Proteomics">
        <title>N-terminome analysis of the human mitochondrial proteome.</title>
        <authorList>
            <person name="Vaca Jacome A.S."/>
            <person name="Rabilloud T."/>
            <person name="Schaeffer-Reiss C."/>
            <person name="Rompais M."/>
            <person name="Ayoub D."/>
            <person name="Lane L."/>
            <person name="Bairoch A."/>
            <person name="Van Dorsselaer A."/>
            <person name="Carapito C."/>
        </authorList>
    </citation>
    <scope>IDENTIFICATION BY MASS SPECTROMETRY [LARGE SCALE ANALYSIS]</scope>
</reference>
<reference key="31">
    <citation type="journal article" date="2023" name="Biomolecules">
        <title>In Vitro Enzymatic Studies Reveal pH and Temperature Sensitive Properties of the CLIC Proteins.</title>
        <authorList>
            <person name="Alghalayini A."/>
            <person name="Hossain K.R."/>
            <person name="Moghaddasi S."/>
            <person name="Turkewitz D.R."/>
            <person name="D'Amario C."/>
            <person name="Wallach M."/>
            <person name="Valenzuela S.M."/>
        </authorList>
    </citation>
    <scope>FUNCTION</scope>
    <scope>BIOPHYSICOCHEMICAL PROPERTIES</scope>
    <scope>ACTIVITY REGULATION</scope>
    <scope>DOMAIN</scope>
    <scope>MUTAGENESIS OF CYS-24; LYS-37 AND CYS-59</scope>
</reference>
<reference key="32">
    <citation type="journal article" date="2001" name="J. Biol. Chem.">
        <title>Crystal structure of a soluble form of the intracellular chloride ion channel CLIC1 (NCC27) at 1.4-A resolution.</title>
        <authorList>
            <person name="Harrop S.J."/>
            <person name="DeMaere M.Z."/>
            <person name="Fairlie W.D."/>
            <person name="Reztsova T."/>
            <person name="Valenzuela S.M."/>
            <person name="Mazzanti M."/>
            <person name="Tonini R."/>
            <person name="Qiu M.R."/>
            <person name="Jankova L."/>
            <person name="Warton K."/>
            <person name="Bauskin A.R."/>
            <person name="Wu W.M."/>
            <person name="Pankhurst S."/>
            <person name="Campbell T.J."/>
            <person name="Breit S.N."/>
            <person name="Curmi P.M.G."/>
        </authorList>
    </citation>
    <scope>X-RAY CRYSTALLOGRAPHY (1.4 ANGSTROMS) IN COMPLEX WITH GLUTATHIONE</scope>
    <scope>FUNCTION</scope>
    <scope>TRANSPORTER ACTIVITY</scope>
    <scope>SUBCELLULAR LOCATION</scope>
    <scope>PREDICTED MEMBRANE TOPOLOGY</scope>
    <scope>PREDICTED TRANSMEMBRANE DOMAIN</scope>
</reference>
<reference key="33">
    <citation type="journal article" date="2004" name="J. Biol. Chem.">
        <title>The intracellular chloride ion channel protein CLIC1 undergoes a redox-controlled structural transition.</title>
        <authorList>
            <person name="Littler D.R."/>
            <person name="Harrop S.J."/>
            <person name="Fairlie W.D."/>
            <person name="Brown L.J."/>
            <person name="Pankhurst G.J."/>
            <person name="Pankhurst S."/>
            <person name="DeMaere M.Z."/>
            <person name="Campbell T.J."/>
            <person name="Bauskin A.R."/>
            <person name="Tonini R."/>
            <person name="Mazzanti M."/>
            <person name="Breit S.N."/>
            <person name="Curmi P.M.G."/>
        </authorList>
    </citation>
    <scope>X-RAY CRYSTALLOGRAPHY (1.79 ANGSTROMS)</scope>
    <scope>FUNCTION</scope>
    <scope>TRANSPORTER ACTIVITY</scope>
    <scope>SUBUNIT</scope>
    <scope>SUBCELLULAR LOCATION</scope>
    <scope>DOMAIN</scope>
    <scope>MUTAGENESIS OF CYS-24 AND CYS-59</scope>
    <scope>GLUTATHIONYLATION AT CYS-24</scope>
    <scope>DISULFIDE BOND</scope>
    <scope>PREDICTED MEMBRANE TOPOLOGY</scope>
    <scope>PREDICTED TRANSMEMBRANE DOMAIN</scope>
</reference>
<dbReference type="EC" id="1.8.-.-" evidence="26 27"/>
<dbReference type="EC" id="1.8.5.1" evidence="17"/>
<dbReference type="EMBL" id="U93205">
    <property type="protein sequence ID" value="AAC25675.1"/>
    <property type="molecule type" value="mRNA"/>
</dbReference>
<dbReference type="EMBL" id="AF034607">
    <property type="protein sequence ID" value="AAD20437.1"/>
    <property type="molecule type" value="mRNA"/>
</dbReference>
<dbReference type="EMBL" id="AF109197">
    <property type="protein sequence ID" value="AAD26137.1"/>
    <property type="molecule type" value="mRNA"/>
</dbReference>
<dbReference type="EMBL" id="AJ012008">
    <property type="protein sequence ID" value="CAB46078.1"/>
    <property type="molecule type" value="Genomic_DNA"/>
</dbReference>
<dbReference type="EMBL" id="CR542071">
    <property type="protein sequence ID" value="CAG46868.1"/>
    <property type="molecule type" value="mRNA"/>
</dbReference>
<dbReference type="EMBL" id="AF129756">
    <property type="protein sequence ID" value="AAD18073.1"/>
    <property type="molecule type" value="Genomic_DNA"/>
</dbReference>
<dbReference type="EMBL" id="BA000025">
    <property type="protein sequence ID" value="BAB63376.1"/>
    <property type="molecule type" value="Genomic_DNA"/>
</dbReference>
<dbReference type="EMBL" id="AL662899">
    <property type="status" value="NOT_ANNOTATED_CDS"/>
    <property type="molecule type" value="Genomic_DNA"/>
</dbReference>
<dbReference type="EMBL" id="BC064527">
    <property type="protein sequence ID" value="AAH64527.1"/>
    <property type="molecule type" value="mRNA"/>
</dbReference>
<dbReference type="EMBL" id="BC095469">
    <property type="protein sequence ID" value="AAH95469.1"/>
    <property type="molecule type" value="mRNA"/>
</dbReference>
<dbReference type="EMBL" id="X87689">
    <property type="protein sequence ID" value="CAA61020.1"/>
    <property type="molecule type" value="mRNA"/>
</dbReference>
<dbReference type="CCDS" id="CCDS4719.1"/>
<dbReference type="RefSeq" id="NP_001274522.1">
    <property type="nucleotide sequence ID" value="NM_001287593.1"/>
</dbReference>
<dbReference type="RefSeq" id="NP_001274523.1">
    <property type="nucleotide sequence ID" value="NM_001287594.3"/>
</dbReference>
<dbReference type="RefSeq" id="NP_001279.2">
    <property type="nucleotide sequence ID" value="NM_001288.4"/>
</dbReference>
<dbReference type="PDB" id="1K0M">
    <property type="method" value="X-ray"/>
    <property type="resolution" value="1.40 A"/>
    <property type="chains" value="A/B=1-241"/>
</dbReference>
<dbReference type="PDB" id="1K0N">
    <property type="method" value="X-ray"/>
    <property type="resolution" value="1.80 A"/>
    <property type="chains" value="A/B=1-241"/>
</dbReference>
<dbReference type="PDB" id="1K0O">
    <property type="method" value="X-ray"/>
    <property type="resolution" value="1.75 A"/>
    <property type="chains" value="A/B=1-241"/>
</dbReference>
<dbReference type="PDB" id="1RK4">
    <property type="method" value="X-ray"/>
    <property type="resolution" value="1.79 A"/>
    <property type="chains" value="A/B=1-241"/>
</dbReference>
<dbReference type="PDB" id="3O3T">
    <property type="method" value="X-ray"/>
    <property type="resolution" value="1.70 A"/>
    <property type="chains" value="A=1-241"/>
</dbReference>
<dbReference type="PDB" id="3P8W">
    <property type="method" value="X-ray"/>
    <property type="resolution" value="2.00 A"/>
    <property type="chains" value="A=1-241"/>
</dbReference>
<dbReference type="PDB" id="3P90">
    <property type="method" value="X-ray"/>
    <property type="resolution" value="2.30 A"/>
    <property type="chains" value="A=1-241"/>
</dbReference>
<dbReference type="PDB" id="3QR6">
    <property type="method" value="X-ray"/>
    <property type="resolution" value="1.78 A"/>
    <property type="chains" value="A=1-241"/>
</dbReference>
<dbReference type="PDB" id="3SWL">
    <property type="method" value="X-ray"/>
    <property type="resolution" value="2.35 A"/>
    <property type="chains" value="A=6-241"/>
</dbReference>
<dbReference type="PDB" id="3TGZ">
    <property type="method" value="X-ray"/>
    <property type="resolution" value="2.30 A"/>
    <property type="chains" value="A/B=1-241"/>
</dbReference>
<dbReference type="PDB" id="3UVH">
    <property type="method" value="X-ray"/>
    <property type="resolution" value="1.84 A"/>
    <property type="chains" value="A/B=1-241"/>
</dbReference>
<dbReference type="PDB" id="4IQA">
    <property type="method" value="X-ray"/>
    <property type="resolution" value="2.49 A"/>
    <property type="chains" value="A/B=6-241"/>
</dbReference>
<dbReference type="PDB" id="4JZQ">
    <property type="method" value="X-ray"/>
    <property type="resolution" value="1.35 A"/>
    <property type="chains" value="A/B=1-241"/>
</dbReference>
<dbReference type="PDB" id="4K0G">
    <property type="method" value="X-ray"/>
    <property type="resolution" value="1.40 A"/>
    <property type="chains" value="A=2-241"/>
</dbReference>
<dbReference type="PDB" id="4K0N">
    <property type="method" value="X-ray"/>
    <property type="resolution" value="1.25 A"/>
    <property type="chains" value="A=1-241"/>
</dbReference>
<dbReference type="PDB" id="7F8R">
    <property type="method" value="X-ray"/>
    <property type="resolution" value="2.51 A"/>
    <property type="chains" value="A/B=1-241"/>
</dbReference>
<dbReference type="PDB" id="7FBQ">
    <property type="method" value="X-ray"/>
    <property type="resolution" value="1.80 A"/>
    <property type="chains" value="A=1-241"/>
</dbReference>
<dbReference type="PDBsum" id="1K0M"/>
<dbReference type="PDBsum" id="1K0N"/>
<dbReference type="PDBsum" id="1K0O"/>
<dbReference type="PDBsum" id="1RK4"/>
<dbReference type="PDBsum" id="3O3T"/>
<dbReference type="PDBsum" id="3P8W"/>
<dbReference type="PDBsum" id="3P90"/>
<dbReference type="PDBsum" id="3QR6"/>
<dbReference type="PDBsum" id="3SWL"/>
<dbReference type="PDBsum" id="3TGZ"/>
<dbReference type="PDBsum" id="3UVH"/>
<dbReference type="PDBsum" id="4IQA"/>
<dbReference type="PDBsum" id="4JZQ"/>
<dbReference type="PDBsum" id="4K0G"/>
<dbReference type="PDBsum" id="4K0N"/>
<dbReference type="PDBsum" id="7F8R"/>
<dbReference type="PDBsum" id="7FBQ"/>
<dbReference type="SMR" id="O00299"/>
<dbReference type="BioGRID" id="107604">
    <property type="interactions" value="171"/>
</dbReference>
<dbReference type="FunCoup" id="O00299">
    <property type="interactions" value="1470"/>
</dbReference>
<dbReference type="IntAct" id="O00299">
    <property type="interactions" value="74"/>
</dbReference>
<dbReference type="MINT" id="O00299"/>
<dbReference type="STRING" id="9606.ENSP00000364935"/>
<dbReference type="BindingDB" id="O00299"/>
<dbReference type="DrugBank" id="DB11638">
    <property type="generic name" value="Artenimol"/>
</dbReference>
<dbReference type="DrugBank" id="DB09130">
    <property type="generic name" value="Copper"/>
</dbReference>
<dbReference type="TCDB" id="1.A.12.1.2">
    <property type="family name" value="the intracellular chloride channel (clic) family"/>
</dbReference>
<dbReference type="GlyGen" id="O00299">
    <property type="glycosylation" value="3 sites, 1 N-linked glycan (1 site), 1 O-linked glycan (2 sites)"/>
</dbReference>
<dbReference type="iPTMnet" id="O00299"/>
<dbReference type="PhosphoSitePlus" id="O00299"/>
<dbReference type="SwissPalm" id="O00299"/>
<dbReference type="BioMuta" id="CLIC1"/>
<dbReference type="OGP" id="O00299"/>
<dbReference type="CPTAC" id="CPTAC-1393"/>
<dbReference type="CPTAC" id="CPTAC-1394"/>
<dbReference type="CPTAC" id="CPTAC-1395"/>
<dbReference type="CPTAC" id="CPTAC-1396"/>
<dbReference type="CPTAC" id="CPTAC-1397"/>
<dbReference type="jPOST" id="O00299"/>
<dbReference type="MassIVE" id="O00299"/>
<dbReference type="PaxDb" id="9606-ENSP00000364935"/>
<dbReference type="PeptideAtlas" id="O00299"/>
<dbReference type="PRIDE" id="O00299"/>
<dbReference type="ProteomicsDB" id="47828"/>
<dbReference type="Pumba" id="O00299"/>
<dbReference type="TopDownProteomics" id="O00299"/>
<dbReference type="Antibodypedia" id="27604">
    <property type="antibodies" value="436 antibodies from 38 providers"/>
</dbReference>
<dbReference type="CPTC" id="O00299">
    <property type="antibodies" value="2 antibodies"/>
</dbReference>
<dbReference type="DNASU" id="1192"/>
<dbReference type="Ensembl" id="ENST00000375779.6">
    <property type="protein sequence ID" value="ENSP00000364934.2"/>
    <property type="gene ID" value="ENSG00000213719.8"/>
</dbReference>
<dbReference type="Ensembl" id="ENST00000375780.6">
    <property type="protein sequence ID" value="ENSP00000364935.2"/>
    <property type="gene ID" value="ENSG00000213719.8"/>
</dbReference>
<dbReference type="Ensembl" id="ENST00000375784.8">
    <property type="protein sequence ID" value="ENSP00000364940.3"/>
    <property type="gene ID" value="ENSG00000213719.8"/>
</dbReference>
<dbReference type="Ensembl" id="ENST00000383404.6">
    <property type="protein sequence ID" value="ENSP00000372896.2"/>
    <property type="gene ID" value="ENSG00000206394.8"/>
</dbReference>
<dbReference type="Ensembl" id="ENST00000383405.6">
    <property type="protein sequence ID" value="ENSP00000372897.2"/>
    <property type="gene ID" value="ENSG00000206394.8"/>
</dbReference>
<dbReference type="Ensembl" id="ENST00000395892.5">
    <property type="protein sequence ID" value="ENSP00000379229.1"/>
    <property type="gene ID" value="ENSG00000213719.8"/>
</dbReference>
<dbReference type="Ensembl" id="ENST00000400052.7">
    <property type="protein sequence ID" value="ENSP00000382926.3"/>
    <property type="gene ID" value="ENSG00000206394.8"/>
</dbReference>
<dbReference type="Ensembl" id="ENST00000400058.5">
    <property type="protein sequence ID" value="ENSP00000382931.1"/>
    <property type="gene ID" value="ENSG00000206394.8"/>
</dbReference>
<dbReference type="Ensembl" id="ENST00000415179.5">
    <property type="protein sequence ID" value="ENSP00000409247.1"/>
    <property type="gene ID" value="ENSG00000226248.6"/>
</dbReference>
<dbReference type="Ensembl" id="ENST00000418285.6">
    <property type="protein sequence ID" value="ENSP00000407791.2"/>
    <property type="gene ID" value="ENSG00000226417.6"/>
</dbReference>
<dbReference type="Ensembl" id="ENST00000420458.5">
    <property type="protein sequence ID" value="ENSP00000410965.1"/>
    <property type="gene ID" value="ENSG00000226651.6"/>
</dbReference>
<dbReference type="Ensembl" id="ENST00000422167.6">
    <property type="protein sequence ID" value="ENSP00000407429.2"/>
    <property type="gene ID" value="ENSG00000226248.6"/>
</dbReference>
<dbReference type="Ensembl" id="ENST00000423055.5">
    <property type="protein sequence ID" value="ENSP00000406968.1"/>
    <property type="gene ID" value="ENSG00000226417.6"/>
</dbReference>
<dbReference type="Ensembl" id="ENST00000423143.5">
    <property type="protein sequence ID" value="ENSP00000404589.1"/>
    <property type="gene ID" value="ENSG00000223639.6"/>
</dbReference>
<dbReference type="Ensembl" id="ENST00000423804.5">
    <property type="protein sequence ID" value="ENSP00000409979.1"/>
    <property type="gene ID" value="ENSG00000230685.6"/>
</dbReference>
<dbReference type="Ensembl" id="ENST00000425464.6">
    <property type="protein sequence ID" value="ENSP00000401292.2"/>
    <property type="gene ID" value="ENSG00000223639.6"/>
</dbReference>
<dbReference type="Ensembl" id="ENST00000431921.5">
    <property type="protein sequence ID" value="ENSP00000408357.1"/>
    <property type="gene ID" value="ENSG00000226248.6"/>
</dbReference>
<dbReference type="Ensembl" id="ENST00000433916.5">
    <property type="protein sequence ID" value="ENSP00000391395.1"/>
    <property type="gene ID" value="ENSG00000226651.6"/>
</dbReference>
<dbReference type="Ensembl" id="ENST00000434202.5">
    <property type="protein sequence ID" value="ENSP00000400532.1"/>
    <property type="gene ID" value="ENSG00000226651.6"/>
</dbReference>
<dbReference type="Ensembl" id="ENST00000435242.5">
    <property type="protein sequence ID" value="ENSP00000412217.1"/>
    <property type="gene ID" value="ENSG00000226417.6"/>
</dbReference>
<dbReference type="Ensembl" id="ENST00000438708.5">
    <property type="protein sequence ID" value="ENSP00000406088.1"/>
    <property type="gene ID" value="ENSG00000226248.6"/>
</dbReference>
<dbReference type="Ensembl" id="ENST00000438750.5">
    <property type="protein sequence ID" value="ENSP00000404037.1"/>
    <property type="gene ID" value="ENSG00000223639.6"/>
</dbReference>
<dbReference type="Ensembl" id="ENST00000442045.5">
    <property type="protein sequence ID" value="ENSP00000400280.1"/>
    <property type="gene ID" value="ENSG00000226417.6"/>
</dbReference>
<dbReference type="Ensembl" id="ENST00000447338.5">
    <property type="protein sequence ID" value="ENSP00000413330.1"/>
    <property type="gene ID" value="ENSG00000230685.6"/>
</dbReference>
<dbReference type="Ensembl" id="ENST00000447369.5">
    <property type="protein sequence ID" value="ENSP00000408094.1"/>
    <property type="gene ID" value="ENSG00000230685.6"/>
</dbReference>
<dbReference type="Ensembl" id="ENST00000451546.5">
    <property type="protein sequence ID" value="ENSP00000416211.1"/>
    <property type="gene ID" value="ENSG00000223639.6"/>
</dbReference>
<dbReference type="Ensembl" id="ENST00000456863.6">
    <property type="protein sequence ID" value="ENSP00000406335.2"/>
    <property type="gene ID" value="ENSG00000226651.6"/>
</dbReference>
<dbReference type="Ensembl" id="ENST00000457485.6">
    <property type="protein sequence ID" value="ENSP00000398056.2"/>
    <property type="gene ID" value="ENSG00000230685.6"/>
</dbReference>
<dbReference type="Ensembl" id="ENST00000614673.1">
    <property type="protein sequence ID" value="ENSP00000480256.1"/>
    <property type="gene ID" value="ENSG00000230685.6"/>
</dbReference>
<dbReference type="Ensembl" id="ENST00000614982.1">
    <property type="protein sequence ID" value="ENSP00000477623.1"/>
    <property type="gene ID" value="ENSG00000206394.8"/>
</dbReference>
<dbReference type="Ensembl" id="ENST00000616760.1">
    <property type="protein sequence ID" value="ENSP00000479808.1"/>
    <property type="gene ID" value="ENSG00000213719.8"/>
</dbReference>
<dbReference type="Ensembl" id="ENST00000618288.1">
    <property type="protein sequence ID" value="ENSP00000479501.1"/>
    <property type="gene ID" value="ENSG00000226417.6"/>
</dbReference>
<dbReference type="Ensembl" id="ENST00000619727.1">
    <property type="protein sequence ID" value="ENSP00000482255.1"/>
    <property type="gene ID" value="ENSG00000226651.6"/>
</dbReference>
<dbReference type="Ensembl" id="ENST00000621055.1">
    <property type="protein sequence ID" value="ENSP00000478930.1"/>
    <property type="gene ID" value="ENSG00000226248.6"/>
</dbReference>
<dbReference type="Ensembl" id="ENST00000622613.1">
    <property type="protein sequence ID" value="ENSP00000484581.1"/>
    <property type="gene ID" value="ENSG00000223639.6"/>
</dbReference>
<dbReference type="GeneID" id="1192"/>
<dbReference type="KEGG" id="hsa:1192"/>
<dbReference type="MANE-Select" id="ENST00000375784.8">
    <property type="protein sequence ID" value="ENSP00000364940.3"/>
    <property type="RefSeq nucleotide sequence ID" value="NM_001288.6"/>
    <property type="RefSeq protein sequence ID" value="NP_001279.2"/>
</dbReference>
<dbReference type="AGR" id="HGNC:2062"/>
<dbReference type="CTD" id="1192"/>
<dbReference type="DisGeNET" id="1192"/>
<dbReference type="GeneCards" id="CLIC1"/>
<dbReference type="HGNC" id="HGNC:2062">
    <property type="gene designation" value="CLIC1"/>
</dbReference>
<dbReference type="HPA" id="ENSG00000213719">
    <property type="expression patterns" value="Low tissue specificity"/>
</dbReference>
<dbReference type="MIM" id="602872">
    <property type="type" value="gene"/>
</dbReference>
<dbReference type="neXtProt" id="NX_O00299"/>
<dbReference type="OpenTargets" id="ENSG00000213719"/>
<dbReference type="PharmGKB" id="PA26588"/>
<dbReference type="VEuPathDB" id="HostDB:ENSG00000213719"/>
<dbReference type="eggNOG" id="KOG1422">
    <property type="taxonomic scope" value="Eukaryota"/>
</dbReference>
<dbReference type="GeneTree" id="ENSGT00940000154708"/>
<dbReference type="HOGENOM" id="CLU_061051_1_0_1"/>
<dbReference type="InParanoid" id="O00299"/>
<dbReference type="OMA" id="SYMKAIF"/>
<dbReference type="OrthoDB" id="1935530at2759"/>
<dbReference type="PAN-GO" id="O00299">
    <property type="GO annotations" value="4 GO annotations based on evolutionary models"/>
</dbReference>
<dbReference type="PhylomeDB" id="O00299"/>
<dbReference type="TreeFam" id="TF315438"/>
<dbReference type="PathwayCommons" id="O00299"/>
<dbReference type="SignaLink" id="O00299"/>
<dbReference type="BioGRID-ORCS" id="1192">
    <property type="hits" value="9 hits in 1151 CRISPR screens"/>
</dbReference>
<dbReference type="CD-CODE" id="91857CE7">
    <property type="entry name" value="Nucleolus"/>
</dbReference>
<dbReference type="ChiTaRS" id="CLIC1">
    <property type="organism name" value="human"/>
</dbReference>
<dbReference type="EvolutionaryTrace" id="O00299"/>
<dbReference type="GeneWiki" id="CLIC1"/>
<dbReference type="GenomeRNAi" id="1192"/>
<dbReference type="Pharos" id="O00299">
    <property type="development level" value="Tbio"/>
</dbReference>
<dbReference type="PRO" id="PR:O00299"/>
<dbReference type="Proteomes" id="UP000005640">
    <property type="component" value="Chromosome 6"/>
</dbReference>
<dbReference type="RNAct" id="O00299">
    <property type="molecule type" value="protein"/>
</dbReference>
<dbReference type="Bgee" id="ENSG00000213719">
    <property type="expression patterns" value="Expressed in granulocyte and 97 other cell types or tissues"/>
</dbReference>
<dbReference type="ExpressionAtlas" id="O00299">
    <property type="expression patterns" value="baseline and differential"/>
</dbReference>
<dbReference type="GO" id="GO:0072562">
    <property type="term" value="C:blood microparticle"/>
    <property type="evidence" value="ECO:0007005"/>
    <property type="project" value="UniProtKB"/>
</dbReference>
<dbReference type="GO" id="GO:0005903">
    <property type="term" value="C:brush border"/>
    <property type="evidence" value="ECO:0000304"/>
    <property type="project" value="UniProtKB"/>
</dbReference>
<dbReference type="GO" id="GO:0034707">
    <property type="term" value="C:chloride channel complex"/>
    <property type="evidence" value="ECO:0007669"/>
    <property type="project" value="UniProtKB-KW"/>
</dbReference>
<dbReference type="GO" id="GO:0005737">
    <property type="term" value="C:cytoplasm"/>
    <property type="evidence" value="ECO:0000314"/>
    <property type="project" value="UniProtKB"/>
</dbReference>
<dbReference type="GO" id="GO:0005783">
    <property type="term" value="C:endoplasmic reticulum"/>
    <property type="evidence" value="ECO:0007669"/>
    <property type="project" value="UniProtKB-SubCell"/>
</dbReference>
<dbReference type="GO" id="GO:0070062">
    <property type="term" value="C:extracellular exosome"/>
    <property type="evidence" value="ECO:0000314"/>
    <property type="project" value="UniProtKB"/>
</dbReference>
<dbReference type="GO" id="GO:0005615">
    <property type="term" value="C:extracellular space"/>
    <property type="evidence" value="ECO:0007005"/>
    <property type="project" value="UniProtKB"/>
</dbReference>
<dbReference type="GO" id="GO:0016020">
    <property type="term" value="C:membrane"/>
    <property type="evidence" value="ECO:0007005"/>
    <property type="project" value="UniProtKB"/>
</dbReference>
<dbReference type="GO" id="GO:0005739">
    <property type="term" value="C:mitochondrion"/>
    <property type="evidence" value="ECO:0007669"/>
    <property type="project" value="Ensembl"/>
</dbReference>
<dbReference type="GO" id="GO:0005635">
    <property type="term" value="C:nuclear envelope"/>
    <property type="evidence" value="ECO:0000314"/>
    <property type="project" value="MGI"/>
</dbReference>
<dbReference type="GO" id="GO:0031965">
    <property type="term" value="C:nuclear membrane"/>
    <property type="evidence" value="ECO:0007669"/>
    <property type="project" value="UniProtKB-SubCell"/>
</dbReference>
<dbReference type="GO" id="GO:0005634">
    <property type="term" value="C:nucleus"/>
    <property type="evidence" value="ECO:0007005"/>
    <property type="project" value="UniProtKB"/>
</dbReference>
<dbReference type="GO" id="GO:0048471">
    <property type="term" value="C:perinuclear region of cytoplasm"/>
    <property type="evidence" value="ECO:0000314"/>
    <property type="project" value="BHF-UCL"/>
</dbReference>
<dbReference type="GO" id="GO:0005886">
    <property type="term" value="C:plasma membrane"/>
    <property type="evidence" value="ECO:0007669"/>
    <property type="project" value="UniProtKB-SubCell"/>
</dbReference>
<dbReference type="GO" id="GO:0031982">
    <property type="term" value="C:vesicle"/>
    <property type="evidence" value="ECO:0007005"/>
    <property type="project" value="UniProtKB"/>
</dbReference>
<dbReference type="GO" id="GO:0045296">
    <property type="term" value="F:cadherin binding"/>
    <property type="evidence" value="ECO:0007005"/>
    <property type="project" value="BHF-UCL"/>
</dbReference>
<dbReference type="GO" id="GO:0005254">
    <property type="term" value="F:chloride channel activity"/>
    <property type="evidence" value="ECO:0000314"/>
    <property type="project" value="MGI"/>
</dbReference>
<dbReference type="GO" id="GO:0016491">
    <property type="term" value="F:oxidoreductase activity"/>
    <property type="evidence" value="ECO:0007669"/>
    <property type="project" value="UniProtKB-KW"/>
</dbReference>
<dbReference type="GO" id="GO:0006821">
    <property type="term" value="P:chloride transport"/>
    <property type="evidence" value="ECO:0000314"/>
    <property type="project" value="MGI"/>
</dbReference>
<dbReference type="GO" id="GO:0070527">
    <property type="term" value="P:platelet aggregation"/>
    <property type="evidence" value="ECO:0007001"/>
    <property type="project" value="UniProtKB"/>
</dbReference>
<dbReference type="GO" id="GO:0045669">
    <property type="term" value="P:positive regulation of osteoblast differentiation"/>
    <property type="evidence" value="ECO:0007669"/>
    <property type="project" value="Ensembl"/>
</dbReference>
<dbReference type="GO" id="GO:0051881">
    <property type="term" value="P:regulation of mitochondrial membrane potential"/>
    <property type="evidence" value="ECO:0007669"/>
    <property type="project" value="Ensembl"/>
</dbReference>
<dbReference type="GO" id="GO:0007165">
    <property type="term" value="P:signal transduction"/>
    <property type="evidence" value="ECO:0000304"/>
    <property type="project" value="UniProtKB"/>
</dbReference>
<dbReference type="CDD" id="cd10300">
    <property type="entry name" value="GST_C_CLIC1"/>
    <property type="match status" value="1"/>
</dbReference>
<dbReference type="CDD" id="cd03061">
    <property type="entry name" value="GST_N_CLIC"/>
    <property type="match status" value="1"/>
</dbReference>
<dbReference type="FunFam" id="1.20.1050.10:FF:000001">
    <property type="entry name" value="Chloride intracellular channel 2"/>
    <property type="match status" value="1"/>
</dbReference>
<dbReference type="FunFam" id="3.40.30.10:FF:000129">
    <property type="entry name" value="Chloride intracellular channel protein 1"/>
    <property type="match status" value="1"/>
</dbReference>
<dbReference type="Gene3D" id="1.20.1050.10">
    <property type="match status" value="1"/>
</dbReference>
<dbReference type="Gene3D" id="3.40.30.10">
    <property type="entry name" value="Glutaredoxin"/>
    <property type="match status" value="1"/>
</dbReference>
<dbReference type="InterPro" id="IPR002946">
    <property type="entry name" value="CLIC"/>
</dbReference>
<dbReference type="InterPro" id="IPR030259">
    <property type="entry name" value="CLIC-1_C"/>
</dbReference>
<dbReference type="InterPro" id="IPR053823">
    <property type="entry name" value="CLIC_N"/>
</dbReference>
<dbReference type="InterPro" id="IPR010987">
    <property type="entry name" value="Glutathione-S-Trfase_C-like"/>
</dbReference>
<dbReference type="InterPro" id="IPR036282">
    <property type="entry name" value="Glutathione-S-Trfase_C_sf"/>
</dbReference>
<dbReference type="InterPro" id="IPR040079">
    <property type="entry name" value="Glutathione_S-Trfase"/>
</dbReference>
<dbReference type="InterPro" id="IPR036249">
    <property type="entry name" value="Thioredoxin-like_sf"/>
</dbReference>
<dbReference type="NCBIfam" id="TIGR00862">
    <property type="entry name" value="O-ClC"/>
    <property type="match status" value="1"/>
</dbReference>
<dbReference type="PANTHER" id="PTHR45476:SF2">
    <property type="entry name" value="CHLORIDE INTRACELLULAR CHANNEL PROTEIN"/>
    <property type="match status" value="1"/>
</dbReference>
<dbReference type="PANTHER" id="PTHR45476">
    <property type="entry name" value="CHLORIDE INTRACELLULAR CHANNEL PROTEIN 6-RELATED"/>
    <property type="match status" value="1"/>
</dbReference>
<dbReference type="Pfam" id="PF22441">
    <property type="entry name" value="CLIC-like_N"/>
    <property type="match status" value="1"/>
</dbReference>
<dbReference type="Pfam" id="PF13410">
    <property type="entry name" value="GST_C_2"/>
    <property type="match status" value="1"/>
</dbReference>
<dbReference type="PRINTS" id="PR01263">
    <property type="entry name" value="INTCLCHANNEL"/>
</dbReference>
<dbReference type="SFLD" id="SFLDS00019">
    <property type="entry name" value="Glutathione_Transferase_(cytos"/>
    <property type="match status" value="1"/>
</dbReference>
<dbReference type="SFLD" id="SFLDG00358">
    <property type="entry name" value="Main_(cytGST)"/>
    <property type="match status" value="1"/>
</dbReference>
<dbReference type="SUPFAM" id="SSF47616">
    <property type="entry name" value="GST C-terminal domain-like"/>
    <property type="match status" value="1"/>
</dbReference>
<dbReference type="SUPFAM" id="SSF52833">
    <property type="entry name" value="Thioredoxin-like"/>
    <property type="match status" value="1"/>
</dbReference>
<dbReference type="PROSITE" id="PS50405">
    <property type="entry name" value="GST_CTER"/>
    <property type="match status" value="1"/>
</dbReference>
<protein>
    <recommendedName>
        <fullName>Chloride intracellular channel protein 1</fullName>
    </recommendedName>
    <alternativeName>
        <fullName>Chloride channel ABP</fullName>
    </alternativeName>
    <alternativeName>
        <fullName evidence="26 27">Glutaredoxin-like oxidoreductase CLIC1</fullName>
        <ecNumber evidence="26 27">1.8.-.-</ecNumber>
    </alternativeName>
    <alternativeName>
        <fullName evidence="26">Glutathione-dependent dehydroascorbate reductase CLIC1</fullName>
        <ecNumber evidence="17">1.8.5.1</ecNumber>
    </alternativeName>
    <alternativeName>
        <fullName>Nuclear chloride ion channel 27</fullName>
        <shortName evidence="21">NCC27</shortName>
    </alternativeName>
    <alternativeName>
        <fullName>Regulatory nuclear chloride ion channel protein</fullName>
        <shortName>hRNCC</shortName>
    </alternativeName>
</protein>
<comment type="function">
    <text evidence="6 7 8 9 10 11 14 15 17 18 19">In the soluble state, catalyzes glutaredoxin-like thiol disulfide exchange reactions with reduced glutathione as electron donor. Reduces selenite and dehydroascorbate and may act as an antioxidant during oxidative stress response (PubMed:25581026, PubMed:37759794). Can insert into membranes and form voltage-dependent multi-ion conductive channels. Membrane insertion seems to be redox-regulated and may occur only under oxidizing conditions. Involved in regulation of the cell cycle.</text>
</comment>
<comment type="catalytic activity">
    <reaction evidence="17">
        <text>L-dehydroascorbate + 2 glutathione = glutathione disulfide + L-ascorbate</text>
        <dbReference type="Rhea" id="RHEA:24424"/>
        <dbReference type="ChEBI" id="CHEBI:38290"/>
        <dbReference type="ChEBI" id="CHEBI:57925"/>
        <dbReference type="ChEBI" id="CHEBI:58297"/>
        <dbReference type="ChEBI" id="CHEBI:58539"/>
        <dbReference type="EC" id="1.8.5.1"/>
    </reaction>
    <physiologicalReaction direction="left-to-right" evidence="26">
        <dbReference type="Rhea" id="RHEA:24425"/>
    </physiologicalReaction>
</comment>
<comment type="catalytic activity">
    <reaction evidence="8 9 11 14 15 19">
        <text>chloride(in) = chloride(out)</text>
        <dbReference type="Rhea" id="RHEA:29823"/>
        <dbReference type="ChEBI" id="CHEBI:17996"/>
    </reaction>
</comment>
<comment type="catalytic activity">
    <reaction evidence="7 15">
        <text>iodide(out) = iodide(in)</text>
        <dbReference type="Rhea" id="RHEA:66324"/>
        <dbReference type="ChEBI" id="CHEBI:16382"/>
    </reaction>
</comment>
<comment type="catalytic activity">
    <reaction evidence="15">
        <text>thiocyanate(in) = thiocyanate(out)</text>
        <dbReference type="Rhea" id="RHEA:75347"/>
        <dbReference type="ChEBI" id="CHEBI:18022"/>
    </reaction>
</comment>
<comment type="catalytic activity">
    <reaction evidence="15">
        <text>nitrate(in) = nitrate(out)</text>
        <dbReference type="Rhea" id="RHEA:34923"/>
        <dbReference type="ChEBI" id="CHEBI:17632"/>
    </reaction>
</comment>
<comment type="catalytic activity">
    <reaction evidence="7 15">
        <text>bromide(in) = bromide(out)</text>
        <dbReference type="Rhea" id="RHEA:75383"/>
        <dbReference type="ChEBI" id="CHEBI:15858"/>
    </reaction>
</comment>
<comment type="catalytic activity">
    <reaction evidence="15">
        <text>fluoride(in) = fluoride(out)</text>
        <dbReference type="Rhea" id="RHEA:76159"/>
        <dbReference type="ChEBI" id="CHEBI:17051"/>
    </reaction>
</comment>
<comment type="activity regulation">
    <text evidence="7 11 15 17 18">The oxidoreductase activity is inhibited by rapamycin, amphotericin B and IAA-94 (PubMed:25581026, PubMed:37759794). The channel conductance is regulated by pH and redox membrane potential. Inhibited by IAA-94 (PubMed:10874038, PubMed:11978800, PubMed:16339885).</text>
</comment>
<comment type="biophysicochemical properties">
    <kinetics>
        <KM evidence="18">0.2738 mM for 2-hydroxyethyl disulfide (HEDS)</KM>
        <KM evidence="17">4.81 uM for selenite</KM>
        <Vmax evidence="18">5.573 umol/min/mg enzyme toward 2-hydroxyethyl disulfide (HEDS)</Vmax>
    </kinetics>
    <phDependence>
        <text evidence="18">Optimally active at neutral to slightly alkaline pH.</text>
    </phDependence>
</comment>
<comment type="subunit">
    <text evidence="9 12 13 14">Monomer. Homodimer (in vitro). Interacts with TRAPPC2. Dimerization requires a conformation change that leads to the exposure of a large hydrophobic surface. In vivo, this may lead to membrane insertion. Interacts with AKAP9.</text>
</comment>
<comment type="interaction">
    <interactant intactId="EBI-347404">
        <id>O00299</id>
    </interactant>
    <interactant intactId="EBI-349854">
        <id>P13569</id>
        <label>CFTR</label>
    </interactant>
    <organismsDiffer>false</organismsDiffer>
    <experiments>15</experiments>
</comment>
<comment type="interaction">
    <interactant intactId="EBI-347404">
        <id>O00299</id>
    </interactant>
    <interactant intactId="EBI-347619">
        <id>O15116</id>
        <label>LSM1</label>
    </interactant>
    <organismsDiffer>false</organismsDiffer>
    <experiments>4</experiments>
</comment>
<comment type="interaction">
    <interactant intactId="EBI-347404">
        <id>O00299</id>
    </interactant>
    <interactant intactId="EBI-16439278">
        <id>Q6FHY5</id>
        <label>MEOX2</label>
    </interactant>
    <organismsDiffer>false</organismsDiffer>
    <experiments>3</experiments>
</comment>
<comment type="interaction">
    <interactant intactId="EBI-347404">
        <id>O00299</id>
    </interactant>
    <interactant intactId="EBI-2859639">
        <id>Q5HYW2</id>
        <label>NHSL2</label>
    </interactant>
    <organismsDiffer>false</organismsDiffer>
    <experiments>3</experiments>
</comment>
<comment type="interaction">
    <interactant intactId="EBI-347404">
        <id>O00299</id>
    </interactant>
    <interactant intactId="EBI-752185">
        <id>O75832</id>
        <label>PSMD10</label>
    </interactant>
    <organismsDiffer>false</organismsDiffer>
    <experiments>9</experiments>
</comment>
<comment type="interaction">
    <interactant intactId="EBI-347404">
        <id>O00299</id>
    </interactant>
    <interactant intactId="EBI-11978969">
        <id>Q4KMQ1-2</id>
        <label>TPRN</label>
    </interactant>
    <organismsDiffer>false</organismsDiffer>
    <experiments>8</experiments>
</comment>
<comment type="subcellular location">
    <subcellularLocation>
        <location evidence="13 19">Nucleus</location>
    </subcellularLocation>
    <subcellularLocation>
        <location evidence="19">Nucleus membrane</location>
        <topology evidence="23">Single-pass membrane protein</topology>
    </subcellularLocation>
    <subcellularLocation>
        <location evidence="5 9 13 19 24 25">Cytoplasm</location>
    </subcellularLocation>
    <subcellularLocation>
        <location evidence="9 10 14 24">Cell membrane</location>
        <topology evidence="9 14">Single-pass membrane protein</topology>
    </subcellularLocation>
    <subcellularLocation>
        <location evidence="1">Endoplasmic reticulum</location>
    </subcellularLocation>
    <text evidence="1 9 10 13 14 19">Mostly in the nucleus including in the nuclear membrane (PubMed:12681486, PubMed:9139710). Small amount in the cytoplasm and the plasma membrane (PubMed:9139710). Exists both as soluble cytoplasmic protein and as membrane protein with probably a single transmembrane domain (PubMed:11551966, PubMed:11940526, PubMed:12681486, PubMed:14613939, PubMed:9139710). Might not be present in the nucleus of cardiac cells (By similarity).</text>
</comment>
<comment type="tissue specificity">
    <text evidence="5">Expression is prominent in heart, placenta, liver, kidney and pancreas.</text>
</comment>
<comment type="domain">
    <text evidence="17 18">The active G-site contains a monothiol Cys-X-X-Ser motif which mediates glutathione-dependent redox catalysis.</text>
</comment>
<comment type="domain">
    <text evidence="14 16">Members of this family may change from a globular, soluble state to a state where the N-terminal domain is inserted into the membrane and functions as a channel. The redox status of the active cysteine in Cys-X-X-Cys/Ser motif likely determines the capacity to adopt a soluble or membrane-inserted state. A conformation change of the N-terminal domain is thought to expose hydrophobic surfaces that trigger membrane insertion.</text>
</comment>
<comment type="PTM">
    <text>Hydrogen peroxide treatment causes a conformation change, leading to dimerization and formation of an intramolecular disulfide bond between Cys-24 and Cys-59.</text>
</comment>
<comment type="miscellaneous">
    <text>The protein seems to have very low affinity for glutathione, even though glutathione binding was observed in protein crystals.</text>
</comment>
<comment type="similarity">
    <text evidence="23">Belongs to the chloride channel CLIC family.</text>
</comment>
<comment type="online information" name="Atlas of Genetics and Cytogenetics in Oncology and Haematology">
    <link uri="https://atlasgeneticsoncology.org/gene/50543/CLIC1"/>
</comment>
<proteinExistence type="evidence at protein level"/>